<reference key="1">
    <citation type="journal article" date="2009" name="PLoS Genet.">
        <title>Organised genome dynamics in the Escherichia coli species results in highly diverse adaptive paths.</title>
        <authorList>
            <person name="Touchon M."/>
            <person name="Hoede C."/>
            <person name="Tenaillon O."/>
            <person name="Barbe V."/>
            <person name="Baeriswyl S."/>
            <person name="Bidet P."/>
            <person name="Bingen E."/>
            <person name="Bonacorsi S."/>
            <person name="Bouchier C."/>
            <person name="Bouvet O."/>
            <person name="Calteau A."/>
            <person name="Chiapello H."/>
            <person name="Clermont O."/>
            <person name="Cruveiller S."/>
            <person name="Danchin A."/>
            <person name="Diard M."/>
            <person name="Dossat C."/>
            <person name="Karoui M.E."/>
            <person name="Frapy E."/>
            <person name="Garry L."/>
            <person name="Ghigo J.M."/>
            <person name="Gilles A.M."/>
            <person name="Johnson J."/>
            <person name="Le Bouguenec C."/>
            <person name="Lescat M."/>
            <person name="Mangenot S."/>
            <person name="Martinez-Jehanne V."/>
            <person name="Matic I."/>
            <person name="Nassif X."/>
            <person name="Oztas S."/>
            <person name="Petit M.A."/>
            <person name="Pichon C."/>
            <person name="Rouy Z."/>
            <person name="Ruf C.S."/>
            <person name="Schneider D."/>
            <person name="Tourret J."/>
            <person name="Vacherie B."/>
            <person name="Vallenet D."/>
            <person name="Medigue C."/>
            <person name="Rocha E.P.C."/>
            <person name="Denamur E."/>
        </authorList>
    </citation>
    <scope>NUCLEOTIDE SEQUENCE [LARGE SCALE GENOMIC DNA]</scope>
    <source>
        <strain>S88 / ExPEC</strain>
    </source>
</reference>
<keyword id="KW-0030">Aminoacyl-tRNA synthetase</keyword>
<keyword id="KW-0067">ATP-binding</keyword>
<keyword id="KW-0963">Cytoplasm</keyword>
<keyword id="KW-0436">Ligase</keyword>
<keyword id="KW-0547">Nucleotide-binding</keyword>
<keyword id="KW-0648">Protein biosynthesis</keyword>
<keyword id="KW-1185">Reference proteome</keyword>
<gene>
    <name evidence="1" type="primary">glyQ</name>
    <name type="ordered locus">ECS88_3977</name>
</gene>
<evidence type="ECO:0000255" key="1">
    <source>
        <dbReference type="HAMAP-Rule" id="MF_00254"/>
    </source>
</evidence>
<organism>
    <name type="scientific">Escherichia coli O45:K1 (strain S88 / ExPEC)</name>
    <dbReference type="NCBI Taxonomy" id="585035"/>
    <lineage>
        <taxon>Bacteria</taxon>
        <taxon>Pseudomonadati</taxon>
        <taxon>Pseudomonadota</taxon>
        <taxon>Gammaproteobacteria</taxon>
        <taxon>Enterobacterales</taxon>
        <taxon>Enterobacteriaceae</taxon>
        <taxon>Escherichia</taxon>
    </lineage>
</organism>
<protein>
    <recommendedName>
        <fullName evidence="1">Glycine--tRNA ligase alpha subunit</fullName>
        <ecNumber evidence="1">6.1.1.14</ecNumber>
    </recommendedName>
    <alternativeName>
        <fullName evidence="1">Glycyl-tRNA synthetase alpha subunit</fullName>
        <shortName evidence="1">GlyRS</shortName>
    </alternativeName>
</protein>
<accession>B7MER5</accession>
<proteinExistence type="inferred from homology"/>
<dbReference type="EC" id="6.1.1.14" evidence="1"/>
<dbReference type="EMBL" id="CU928161">
    <property type="protein sequence ID" value="CAR05186.1"/>
    <property type="molecule type" value="Genomic_DNA"/>
</dbReference>
<dbReference type="RefSeq" id="WP_001168544.1">
    <property type="nucleotide sequence ID" value="NC_011742.1"/>
</dbReference>
<dbReference type="SMR" id="B7MER5"/>
<dbReference type="GeneID" id="93778290"/>
<dbReference type="KEGG" id="ecz:ECS88_3977"/>
<dbReference type="HOGENOM" id="CLU_057066_1_0_6"/>
<dbReference type="Proteomes" id="UP000000747">
    <property type="component" value="Chromosome"/>
</dbReference>
<dbReference type="GO" id="GO:0005829">
    <property type="term" value="C:cytosol"/>
    <property type="evidence" value="ECO:0007669"/>
    <property type="project" value="TreeGrafter"/>
</dbReference>
<dbReference type="GO" id="GO:0005524">
    <property type="term" value="F:ATP binding"/>
    <property type="evidence" value="ECO:0007669"/>
    <property type="project" value="UniProtKB-UniRule"/>
</dbReference>
<dbReference type="GO" id="GO:0004820">
    <property type="term" value="F:glycine-tRNA ligase activity"/>
    <property type="evidence" value="ECO:0007669"/>
    <property type="project" value="UniProtKB-UniRule"/>
</dbReference>
<dbReference type="GO" id="GO:0006426">
    <property type="term" value="P:glycyl-tRNA aminoacylation"/>
    <property type="evidence" value="ECO:0007669"/>
    <property type="project" value="UniProtKB-UniRule"/>
</dbReference>
<dbReference type="CDD" id="cd00733">
    <property type="entry name" value="GlyRS_alpha_core"/>
    <property type="match status" value="1"/>
</dbReference>
<dbReference type="FunFam" id="1.20.58.180:FF:000001">
    <property type="entry name" value="Glycine--tRNA ligase alpha subunit"/>
    <property type="match status" value="1"/>
</dbReference>
<dbReference type="FunFam" id="3.30.930.10:FF:000006">
    <property type="entry name" value="Glycine--tRNA ligase alpha subunit"/>
    <property type="match status" value="1"/>
</dbReference>
<dbReference type="Gene3D" id="3.30.930.10">
    <property type="entry name" value="Bira Bifunctional Protein, Domain 2"/>
    <property type="match status" value="1"/>
</dbReference>
<dbReference type="Gene3D" id="1.20.58.180">
    <property type="entry name" value="Class II aaRS and biotin synthetases, domain 2"/>
    <property type="match status" value="1"/>
</dbReference>
<dbReference type="HAMAP" id="MF_00254">
    <property type="entry name" value="Gly_tRNA_synth_alpha"/>
    <property type="match status" value="1"/>
</dbReference>
<dbReference type="InterPro" id="IPR045864">
    <property type="entry name" value="aa-tRNA-synth_II/BPL/LPL"/>
</dbReference>
<dbReference type="InterPro" id="IPR006194">
    <property type="entry name" value="Gly-tRNA-synth_heterodimer"/>
</dbReference>
<dbReference type="InterPro" id="IPR002310">
    <property type="entry name" value="Gly-tRNA_ligase_asu"/>
</dbReference>
<dbReference type="NCBIfam" id="TIGR00388">
    <property type="entry name" value="glyQ"/>
    <property type="match status" value="1"/>
</dbReference>
<dbReference type="NCBIfam" id="NF006827">
    <property type="entry name" value="PRK09348.1"/>
    <property type="match status" value="1"/>
</dbReference>
<dbReference type="PANTHER" id="PTHR30075:SF2">
    <property type="entry name" value="GLYCINE--TRNA LIGASE, CHLOROPLASTIC_MITOCHONDRIAL 2"/>
    <property type="match status" value="1"/>
</dbReference>
<dbReference type="PANTHER" id="PTHR30075">
    <property type="entry name" value="GLYCYL-TRNA SYNTHETASE"/>
    <property type="match status" value="1"/>
</dbReference>
<dbReference type="Pfam" id="PF02091">
    <property type="entry name" value="tRNA-synt_2e"/>
    <property type="match status" value="1"/>
</dbReference>
<dbReference type="PRINTS" id="PR01044">
    <property type="entry name" value="TRNASYNTHGA"/>
</dbReference>
<dbReference type="SUPFAM" id="SSF55681">
    <property type="entry name" value="Class II aaRS and biotin synthetases"/>
    <property type="match status" value="1"/>
</dbReference>
<dbReference type="PROSITE" id="PS50861">
    <property type="entry name" value="AA_TRNA_LIGASE_II_GLYAB"/>
    <property type="match status" value="1"/>
</dbReference>
<feature type="chain" id="PRO_1000197192" description="Glycine--tRNA ligase alpha subunit">
    <location>
        <begin position="1"/>
        <end position="303"/>
    </location>
</feature>
<comment type="catalytic activity">
    <reaction evidence="1">
        <text>tRNA(Gly) + glycine + ATP = glycyl-tRNA(Gly) + AMP + diphosphate</text>
        <dbReference type="Rhea" id="RHEA:16013"/>
        <dbReference type="Rhea" id="RHEA-COMP:9664"/>
        <dbReference type="Rhea" id="RHEA-COMP:9683"/>
        <dbReference type="ChEBI" id="CHEBI:30616"/>
        <dbReference type="ChEBI" id="CHEBI:33019"/>
        <dbReference type="ChEBI" id="CHEBI:57305"/>
        <dbReference type="ChEBI" id="CHEBI:78442"/>
        <dbReference type="ChEBI" id="CHEBI:78522"/>
        <dbReference type="ChEBI" id="CHEBI:456215"/>
        <dbReference type="EC" id="6.1.1.14"/>
    </reaction>
</comment>
<comment type="subunit">
    <text evidence="1">Tetramer of two alpha and two beta subunits.</text>
</comment>
<comment type="subcellular location">
    <subcellularLocation>
        <location evidence="1">Cytoplasm</location>
    </subcellularLocation>
</comment>
<comment type="similarity">
    <text evidence="1">Belongs to the class-II aminoacyl-tRNA synthetase family.</text>
</comment>
<name>SYGA_ECO45</name>
<sequence>MQKFDTRTFQGLILTLQDYWARQGCTIVQPLDMEVGAGTSHPMTCLRALGPEPMAAAYVQPSRRPTDGRYGENPNRLQHYYQFQVVIKPSPDNIQELYLGSLKELGMDPTIHDIRFVEDNWENPTLGAWGLGWEVWLNGMEVTQFTYFQQVGGLECKPVTGEITYGLERLAMYIQGVDSVYDLVWSDGPLGKTTYGDVFHQNEVEQSTYNFEYADVDFLFTCFEQYEKEAQQLLALENPLPLPAYERILKAAHSFNLLDARKAISVTERQRYILRIRTLTKAVAEAYYASREALGFPMCNKDK</sequence>